<dbReference type="EMBL" id="AJ131213">
    <property type="protein sequence ID" value="CAA10324.1"/>
    <property type="status" value="ALT_INIT"/>
    <property type="molecule type" value="Genomic_DNA"/>
</dbReference>
<dbReference type="EMBL" id="AL939116">
    <property type="protein sequence ID" value="CAB40857.1"/>
    <property type="status" value="ALT_INIT"/>
    <property type="molecule type" value="Genomic_DNA"/>
</dbReference>
<dbReference type="PIR" id="T36368">
    <property type="entry name" value="T36368"/>
</dbReference>
<dbReference type="RefSeq" id="NP_627565.1">
    <property type="nucleotide sequence ID" value="NC_003888.3"/>
</dbReference>
<dbReference type="STRING" id="100226.gene:17760979"/>
<dbReference type="PaxDb" id="100226-SCO3357"/>
<dbReference type="KEGG" id="sco:SCO3357"/>
<dbReference type="PATRIC" id="fig|100226.15.peg.3419"/>
<dbReference type="eggNOG" id="ENOG502ZWYH">
    <property type="taxonomic scope" value="Bacteria"/>
</dbReference>
<dbReference type="HOGENOM" id="CLU_078792_0_0_11"/>
<dbReference type="InParanoid" id="Q9ZEP5"/>
<dbReference type="OrthoDB" id="3824278at2"/>
<dbReference type="Proteomes" id="UP000001973">
    <property type="component" value="Chromosome"/>
</dbReference>
<dbReference type="GO" id="GO:0005886">
    <property type="term" value="C:plasma membrane"/>
    <property type="evidence" value="ECO:0007669"/>
    <property type="project" value="UniProtKB-SubCell"/>
</dbReference>
<proteinExistence type="evidence at protein level"/>
<gene>
    <name type="primary">cseA</name>
    <name type="ordered locus">SCO3357</name>
    <name type="ORF">SCE94.08</name>
</gene>
<feature type="signal peptide">
    <location>
        <begin position="1"/>
        <end position="36"/>
    </location>
</feature>
<feature type="chain" id="PRO_0000314479" description="Lipoprotein CseA">
    <location>
        <begin position="37"/>
        <end position="225"/>
    </location>
</feature>
<feature type="region of interest" description="Disordered" evidence="1">
    <location>
        <begin position="40"/>
        <end position="77"/>
    </location>
</feature>
<feature type="region of interest" description="Disordered" evidence="1">
    <location>
        <begin position="205"/>
        <end position="225"/>
    </location>
</feature>
<feature type="compositionally biased region" description="Low complexity" evidence="1">
    <location>
        <begin position="60"/>
        <end position="73"/>
    </location>
</feature>
<feature type="lipid moiety-binding region" description="N-palmitoyl cysteine" evidence="2">
    <location>
        <position position="37"/>
    </location>
</feature>
<feature type="lipid moiety-binding region" description="S-diacylglycerol cysteine" evidence="2">
    <location>
        <position position="37"/>
    </location>
</feature>
<feature type="mutagenesis site" description="Abolishes attachment to the membrane and provokes rapid degradation of mutated protein." evidence="2">
    <original>C</original>
    <variation>A</variation>
    <location>
        <position position="37"/>
    </location>
</feature>
<sequence length="225" mass="23435">MRGLTDGRTPRGTRRTTQAASTAVAVFVALGVSLAGCGTGGTGARDEGPAHADAVGGAGSASPAPAAKASPSKAPDRVDAVRLVKADPKVSPEVKRELKPCVADEYPIDVSYGKVTDGSADDVVVNVLTCGDAVGVGSYVYREEDGAYQNVFKAEEPPVYAEIDRGDLVVTKQVYDKGDPVSSPSGENVITYRWASDRFTEEYRTHNDYSKAAGNAPTPAPEPDS</sequence>
<protein>
    <recommendedName>
        <fullName>Lipoprotein CseA</fullName>
    </recommendedName>
</protein>
<evidence type="ECO:0000256" key="1">
    <source>
        <dbReference type="SAM" id="MobiDB-lite"/>
    </source>
</evidence>
<evidence type="ECO:0000269" key="2">
    <source>
    </source>
</evidence>
<evidence type="ECO:0000305" key="3"/>
<keyword id="KW-1003">Cell membrane</keyword>
<keyword id="KW-0449">Lipoprotein</keyword>
<keyword id="KW-0472">Membrane</keyword>
<keyword id="KW-0564">Palmitate</keyword>
<keyword id="KW-1185">Reference proteome</keyword>
<keyword id="KW-0732">Signal</keyword>
<accession>Q9ZEP5</accession>
<organism>
    <name type="scientific">Streptomyces coelicolor (strain ATCC BAA-471 / A3(2) / M145)</name>
    <dbReference type="NCBI Taxonomy" id="100226"/>
    <lineage>
        <taxon>Bacteria</taxon>
        <taxon>Bacillati</taxon>
        <taxon>Actinomycetota</taxon>
        <taxon>Actinomycetes</taxon>
        <taxon>Kitasatosporales</taxon>
        <taxon>Streptomycetaceae</taxon>
        <taxon>Streptomyces</taxon>
        <taxon>Streptomyces albidoflavus group</taxon>
    </lineage>
</organism>
<name>CSEA_STRCO</name>
<reference key="1">
    <citation type="journal article" date="1999" name="Mol. Microbiol.">
        <title>A putative two-component signal transduction system regulates sigE, a sigma factor required for normal cell wall integrity in Streptomyces coelicolor A3(2).</title>
        <authorList>
            <person name="Paget M.S.B."/>
            <person name="Leibowitz E."/>
            <person name="Buttner M.J."/>
        </authorList>
    </citation>
    <scope>NUCLEOTIDE SEQUENCE [GENOMIC DNA]</scope>
    <source>
        <strain>A3(2) / M600</strain>
    </source>
</reference>
<reference key="2">
    <citation type="journal article" date="2002" name="Nature">
        <title>Complete genome sequence of the model actinomycete Streptomyces coelicolor A3(2).</title>
        <authorList>
            <person name="Bentley S.D."/>
            <person name="Chater K.F."/>
            <person name="Cerdeno-Tarraga A.-M."/>
            <person name="Challis G.L."/>
            <person name="Thomson N.R."/>
            <person name="James K.D."/>
            <person name="Harris D.E."/>
            <person name="Quail M.A."/>
            <person name="Kieser H."/>
            <person name="Harper D."/>
            <person name="Bateman A."/>
            <person name="Brown S."/>
            <person name="Chandra G."/>
            <person name="Chen C.W."/>
            <person name="Collins M."/>
            <person name="Cronin A."/>
            <person name="Fraser A."/>
            <person name="Goble A."/>
            <person name="Hidalgo J."/>
            <person name="Hornsby T."/>
            <person name="Howarth S."/>
            <person name="Huang C.-H."/>
            <person name="Kieser T."/>
            <person name="Larke L."/>
            <person name="Murphy L.D."/>
            <person name="Oliver K."/>
            <person name="O'Neil S."/>
            <person name="Rabbinowitsch E."/>
            <person name="Rajandream M.A."/>
            <person name="Rutherford K.M."/>
            <person name="Rutter S."/>
            <person name="Seeger K."/>
            <person name="Saunders D."/>
            <person name="Sharp S."/>
            <person name="Squares R."/>
            <person name="Squares S."/>
            <person name="Taylor K."/>
            <person name="Warren T."/>
            <person name="Wietzorrek A."/>
            <person name="Woodward J.R."/>
            <person name="Barrell B.G."/>
            <person name="Parkhill J."/>
            <person name="Hopwood D.A."/>
        </authorList>
    </citation>
    <scope>NUCLEOTIDE SEQUENCE [LARGE SCALE GENOMIC DNA]</scope>
    <source>
        <strain>ATCC BAA-471 / A3(2) / M145</strain>
    </source>
</reference>
<reference key="3">
    <citation type="journal article" date="2006" name="J. Bacteriol.">
        <title>The sigma(E) cell envelope stress response of Streptomyces coelicolor is influenced by a novel lipoprotein, CseA.</title>
        <authorList>
            <person name="Hutchings M.I."/>
            <person name="Hong H.J."/>
            <person name="Leibovitz E."/>
            <person name="Sutcliffe I.C."/>
            <person name="Buttner M.J."/>
        </authorList>
    </citation>
    <scope>DETERMINATION OF TRANSLATIONAL START SITE</scope>
    <scope>SUBCELLULAR LOCATION</scope>
    <scope>CHARACTERIZATION</scope>
    <scope>DIACYLGLYCEROL AT CYS-37</scope>
    <scope>PALMITOYLATION AT CYS-37</scope>
    <scope>MUTAGENESIS OF CYS-37</scope>
    <source>
        <strain>A3(2) / M600</strain>
    </source>
</reference>
<comment type="function">
    <text>May be involved in the stabilization of the cell envelope or may interact with the sensor protein CseC to modulate its activity, in response to cell envelope stress.</text>
</comment>
<comment type="subcellular location">
    <subcellularLocation>
        <location evidence="2">Cell membrane</location>
        <topology evidence="2">Lipid-anchor</topology>
    </subcellularLocation>
</comment>
<comment type="sequence caution" evidence="3">
    <conflict type="erroneous initiation">
        <sequence resource="EMBL-CDS" id="CAA10324"/>
    </conflict>
</comment>
<comment type="sequence caution" evidence="3">
    <conflict type="erroneous initiation">
        <sequence resource="EMBL-CDS" id="CAB40857"/>
    </conflict>
</comment>